<protein>
    <recommendedName>
        <fullName evidence="1">4-hydroxybenzoate octaprenyltransferase</fullName>
        <ecNumber evidence="1">2.5.1.39</ecNumber>
    </recommendedName>
    <alternativeName>
        <fullName evidence="1">4-HB polyprenyltransferase</fullName>
    </alternativeName>
</protein>
<feature type="chain" id="PRO_1000069824" description="4-hydroxybenzoate octaprenyltransferase">
    <location>
        <begin position="1"/>
        <end position="282"/>
    </location>
</feature>
<feature type="transmembrane region" description="Helical" evidence="1">
    <location>
        <begin position="17"/>
        <end position="37"/>
    </location>
</feature>
<feature type="transmembrane region" description="Helical" evidence="1">
    <location>
        <begin position="40"/>
        <end position="60"/>
    </location>
</feature>
<feature type="transmembrane region" description="Helical" evidence="1">
    <location>
        <begin position="90"/>
        <end position="110"/>
    </location>
</feature>
<feature type="transmembrane region" description="Helical" evidence="1">
    <location>
        <begin position="113"/>
        <end position="133"/>
    </location>
</feature>
<feature type="transmembrane region" description="Helical" evidence="1">
    <location>
        <begin position="135"/>
        <end position="155"/>
    </location>
</feature>
<feature type="transmembrane region" description="Helical" evidence="1">
    <location>
        <begin position="163"/>
        <end position="183"/>
    </location>
</feature>
<feature type="transmembrane region" description="Helical" evidence="1">
    <location>
        <begin position="207"/>
        <end position="227"/>
    </location>
</feature>
<feature type="transmembrane region" description="Helical" evidence="1">
    <location>
        <begin position="231"/>
        <end position="251"/>
    </location>
</feature>
<feature type="transmembrane region" description="Helical" evidence="1">
    <location>
        <begin position="262"/>
        <end position="282"/>
    </location>
</feature>
<accession>A5IBS2</accession>
<evidence type="ECO:0000255" key="1">
    <source>
        <dbReference type="HAMAP-Rule" id="MF_01635"/>
    </source>
</evidence>
<gene>
    <name evidence="1" type="primary">ubiA</name>
    <name type="ordered locus">LPC_0846</name>
</gene>
<keyword id="KW-0997">Cell inner membrane</keyword>
<keyword id="KW-1003">Cell membrane</keyword>
<keyword id="KW-0460">Magnesium</keyword>
<keyword id="KW-0472">Membrane</keyword>
<keyword id="KW-0808">Transferase</keyword>
<keyword id="KW-0812">Transmembrane</keyword>
<keyword id="KW-1133">Transmembrane helix</keyword>
<keyword id="KW-0831">Ubiquinone biosynthesis</keyword>
<name>UBIA_LEGPC</name>
<proteinExistence type="inferred from homology"/>
<comment type="function">
    <text evidence="1">Catalyzes the prenylation of para-hydroxybenzoate (PHB) with an all-trans polyprenyl group. Mediates the second step in the final reaction sequence of ubiquinone-8 (UQ-8) biosynthesis, which is the condensation of the polyisoprenoid side chain with PHB, generating the first membrane-bound Q intermediate 3-octaprenyl-4-hydroxybenzoate.</text>
</comment>
<comment type="catalytic activity">
    <reaction evidence="1">
        <text>all-trans-octaprenyl diphosphate + 4-hydroxybenzoate = 4-hydroxy-3-(all-trans-octaprenyl)benzoate + diphosphate</text>
        <dbReference type="Rhea" id="RHEA:27782"/>
        <dbReference type="ChEBI" id="CHEBI:1617"/>
        <dbReference type="ChEBI" id="CHEBI:17879"/>
        <dbReference type="ChEBI" id="CHEBI:33019"/>
        <dbReference type="ChEBI" id="CHEBI:57711"/>
        <dbReference type="EC" id="2.5.1.39"/>
    </reaction>
</comment>
<comment type="cofactor">
    <cofactor evidence="1">
        <name>Mg(2+)</name>
        <dbReference type="ChEBI" id="CHEBI:18420"/>
    </cofactor>
</comment>
<comment type="pathway">
    <text evidence="1">Cofactor biosynthesis; ubiquinone biosynthesis.</text>
</comment>
<comment type="subcellular location">
    <subcellularLocation>
        <location evidence="1">Cell inner membrane</location>
        <topology evidence="1">Multi-pass membrane protein</topology>
    </subcellularLocation>
</comment>
<comment type="similarity">
    <text evidence="1">Belongs to the UbiA prenyltransferase family.</text>
</comment>
<organism>
    <name type="scientific">Legionella pneumophila (strain Corby)</name>
    <dbReference type="NCBI Taxonomy" id="400673"/>
    <lineage>
        <taxon>Bacteria</taxon>
        <taxon>Pseudomonadati</taxon>
        <taxon>Pseudomonadota</taxon>
        <taxon>Gammaproteobacteria</taxon>
        <taxon>Legionellales</taxon>
        <taxon>Legionellaceae</taxon>
        <taxon>Legionella</taxon>
    </lineage>
</organism>
<sequence length="282" mass="32272">MIPWNAYVRLLRLNKPIGILLLWYPTAWALWMANQGFPSIDLLMIFLFGTVFMRSAGCVINDIADRHIDRHVARTQFRPLTSGEVSLSEAFILLFILLCASLLLLLKLPINCFYFAVISVLITFLYPFCKRFLNAPQLILGLAFSMGIPMAFIASGKNLNSDFIVLFLINFSWIIAYDTMYAMTDKADDLKIGVKSTAIYFASYDRLIIALLLIFLHSLWLVWAINKNAEWFFYLLWCTAAGILTYQLKLIYARIPKNCFKAFLVSGYYGLVMWFAVGLALI</sequence>
<reference key="1">
    <citation type="submission" date="2006-11" db="EMBL/GenBank/DDBJ databases">
        <title>Identification and characterization of a new conjugation/ type IVA secretion system (trb/tra) of L. pneumophila Corby localized on a mobile genomic island.</title>
        <authorList>
            <person name="Gloeckner G."/>
            <person name="Albert-Weissenberger C."/>
            <person name="Weinmann E."/>
            <person name="Jacobi S."/>
            <person name="Schunder E."/>
            <person name="Steinert M."/>
            <person name="Buchrieser C."/>
            <person name="Hacker J."/>
            <person name="Heuner K."/>
        </authorList>
    </citation>
    <scope>NUCLEOTIDE SEQUENCE [LARGE SCALE GENOMIC DNA]</scope>
    <source>
        <strain>Corby</strain>
    </source>
</reference>
<dbReference type="EC" id="2.5.1.39" evidence="1"/>
<dbReference type="EMBL" id="CP000675">
    <property type="protein sequence ID" value="ABQ54822.1"/>
    <property type="molecule type" value="Genomic_DNA"/>
</dbReference>
<dbReference type="RefSeq" id="WP_011946442.1">
    <property type="nucleotide sequence ID" value="NC_009494.2"/>
</dbReference>
<dbReference type="SMR" id="A5IBS2"/>
<dbReference type="KEGG" id="lpc:LPC_0846"/>
<dbReference type="HOGENOM" id="CLU_034879_1_0_6"/>
<dbReference type="UniPathway" id="UPA00232"/>
<dbReference type="GO" id="GO:0005886">
    <property type="term" value="C:plasma membrane"/>
    <property type="evidence" value="ECO:0007669"/>
    <property type="project" value="UniProtKB-SubCell"/>
</dbReference>
<dbReference type="GO" id="GO:0008412">
    <property type="term" value="F:4-hydroxybenzoate polyprenyltransferase activity"/>
    <property type="evidence" value="ECO:0007669"/>
    <property type="project" value="UniProtKB-UniRule"/>
</dbReference>
<dbReference type="GO" id="GO:0006744">
    <property type="term" value="P:ubiquinone biosynthetic process"/>
    <property type="evidence" value="ECO:0007669"/>
    <property type="project" value="UniProtKB-UniRule"/>
</dbReference>
<dbReference type="CDD" id="cd13959">
    <property type="entry name" value="PT_UbiA_COQ2"/>
    <property type="match status" value="1"/>
</dbReference>
<dbReference type="FunFam" id="1.10.357.140:FF:000008">
    <property type="entry name" value="4-hydroxybenzoate octaprenyltransferase"/>
    <property type="match status" value="1"/>
</dbReference>
<dbReference type="FunFam" id="1.20.120.1780:FF:000001">
    <property type="entry name" value="4-hydroxybenzoate octaprenyltransferase"/>
    <property type="match status" value="1"/>
</dbReference>
<dbReference type="Gene3D" id="1.10.357.140">
    <property type="entry name" value="UbiA prenyltransferase"/>
    <property type="match status" value="1"/>
</dbReference>
<dbReference type="Gene3D" id="1.20.120.1780">
    <property type="entry name" value="UbiA prenyltransferase"/>
    <property type="match status" value="1"/>
</dbReference>
<dbReference type="HAMAP" id="MF_01635">
    <property type="entry name" value="UbiA"/>
    <property type="match status" value="1"/>
</dbReference>
<dbReference type="InterPro" id="IPR006370">
    <property type="entry name" value="HB_polyprenyltransferase-like"/>
</dbReference>
<dbReference type="InterPro" id="IPR039653">
    <property type="entry name" value="Prenyltransferase"/>
</dbReference>
<dbReference type="InterPro" id="IPR000537">
    <property type="entry name" value="UbiA_prenyltransferase"/>
</dbReference>
<dbReference type="InterPro" id="IPR030470">
    <property type="entry name" value="UbiA_prenylTrfase_CS"/>
</dbReference>
<dbReference type="InterPro" id="IPR044878">
    <property type="entry name" value="UbiA_sf"/>
</dbReference>
<dbReference type="NCBIfam" id="TIGR01474">
    <property type="entry name" value="ubiA_proteo"/>
    <property type="match status" value="1"/>
</dbReference>
<dbReference type="PANTHER" id="PTHR11048:SF28">
    <property type="entry name" value="4-HYDROXYBENZOATE POLYPRENYLTRANSFERASE, MITOCHONDRIAL"/>
    <property type="match status" value="1"/>
</dbReference>
<dbReference type="PANTHER" id="PTHR11048">
    <property type="entry name" value="PRENYLTRANSFERASES"/>
    <property type="match status" value="1"/>
</dbReference>
<dbReference type="Pfam" id="PF01040">
    <property type="entry name" value="UbiA"/>
    <property type="match status" value="1"/>
</dbReference>
<dbReference type="PROSITE" id="PS00943">
    <property type="entry name" value="UBIA"/>
    <property type="match status" value="1"/>
</dbReference>